<name>DTD_THEP3</name>
<gene>
    <name evidence="1" type="primary">dtd</name>
    <name type="ordered locus">Teth39_1029</name>
</gene>
<feature type="chain" id="PRO_1000127587" description="D-aminoacyl-tRNA deacylase">
    <location>
        <begin position="1"/>
        <end position="149"/>
    </location>
</feature>
<feature type="short sequence motif" description="Gly-cisPro motif, important for rejection of L-amino acids" evidence="1">
    <location>
        <begin position="137"/>
        <end position="138"/>
    </location>
</feature>
<comment type="function">
    <text evidence="1">An aminoacyl-tRNA editing enzyme that deacylates mischarged D-aminoacyl-tRNAs. Also deacylates mischarged glycyl-tRNA(Ala), protecting cells against glycine mischarging by AlaRS. Acts via tRNA-based rather than protein-based catalysis; rejects L-amino acids rather than detecting D-amino acids in the active site. By recycling D-aminoacyl-tRNA to D-amino acids and free tRNA molecules, this enzyme counteracts the toxicity associated with the formation of D-aminoacyl-tRNA entities in vivo and helps enforce protein L-homochirality.</text>
</comment>
<comment type="catalytic activity">
    <reaction evidence="1">
        <text>glycyl-tRNA(Ala) + H2O = tRNA(Ala) + glycine + H(+)</text>
        <dbReference type="Rhea" id="RHEA:53744"/>
        <dbReference type="Rhea" id="RHEA-COMP:9657"/>
        <dbReference type="Rhea" id="RHEA-COMP:13640"/>
        <dbReference type="ChEBI" id="CHEBI:15377"/>
        <dbReference type="ChEBI" id="CHEBI:15378"/>
        <dbReference type="ChEBI" id="CHEBI:57305"/>
        <dbReference type="ChEBI" id="CHEBI:78442"/>
        <dbReference type="ChEBI" id="CHEBI:78522"/>
        <dbReference type="EC" id="3.1.1.96"/>
    </reaction>
</comment>
<comment type="catalytic activity">
    <reaction evidence="1">
        <text>a D-aminoacyl-tRNA + H2O = a tRNA + a D-alpha-amino acid + H(+)</text>
        <dbReference type="Rhea" id="RHEA:13953"/>
        <dbReference type="Rhea" id="RHEA-COMP:10123"/>
        <dbReference type="Rhea" id="RHEA-COMP:10124"/>
        <dbReference type="ChEBI" id="CHEBI:15377"/>
        <dbReference type="ChEBI" id="CHEBI:15378"/>
        <dbReference type="ChEBI" id="CHEBI:59871"/>
        <dbReference type="ChEBI" id="CHEBI:78442"/>
        <dbReference type="ChEBI" id="CHEBI:79333"/>
        <dbReference type="EC" id="3.1.1.96"/>
    </reaction>
</comment>
<comment type="subunit">
    <text evidence="1">Homodimer.</text>
</comment>
<comment type="subcellular location">
    <subcellularLocation>
        <location evidence="1">Cytoplasm</location>
    </subcellularLocation>
</comment>
<comment type="domain">
    <text evidence="1">A Gly-cisPro motif from one monomer fits into the active site of the other monomer to allow specific chiral rejection of L-amino acids.</text>
</comment>
<comment type="similarity">
    <text evidence="1">Belongs to the DTD family.</text>
</comment>
<proteinExistence type="inferred from homology"/>
<organism>
    <name type="scientific">Thermoanaerobacter pseudethanolicus (strain ATCC 33223 / 39E)</name>
    <name type="common">Clostridium thermohydrosulfuricum</name>
    <dbReference type="NCBI Taxonomy" id="340099"/>
    <lineage>
        <taxon>Bacteria</taxon>
        <taxon>Bacillati</taxon>
        <taxon>Bacillota</taxon>
        <taxon>Clostridia</taxon>
        <taxon>Thermoanaerobacterales</taxon>
        <taxon>Thermoanaerobacteraceae</taxon>
        <taxon>Thermoanaerobacter</taxon>
    </lineage>
</organism>
<sequence length="149" mass="16568">MRAVVQRVSRGEVSVGGEMVSSIGKGFVVLVGISIDDNENDVMYMADKIVNLRVFEDEEGKMNLSLLDIGGEVLLVSQFTLLGDVRKGRRPNFMMAQKPQEALKYFNLLVKEIEKRGVSVKTGIFQAMMKVLIENDGPVTILIDSKKVF</sequence>
<evidence type="ECO:0000255" key="1">
    <source>
        <dbReference type="HAMAP-Rule" id="MF_00518"/>
    </source>
</evidence>
<dbReference type="EC" id="3.1.1.96" evidence="1"/>
<dbReference type="EMBL" id="CP000924">
    <property type="protein sequence ID" value="ABY94684.1"/>
    <property type="molecule type" value="Genomic_DNA"/>
</dbReference>
<dbReference type="RefSeq" id="WP_012269278.1">
    <property type="nucleotide sequence ID" value="NC_010321.1"/>
</dbReference>
<dbReference type="SMR" id="B0K971"/>
<dbReference type="STRING" id="340099.Teth39_1029"/>
<dbReference type="KEGG" id="tpd:Teth39_1029"/>
<dbReference type="eggNOG" id="COG1490">
    <property type="taxonomic scope" value="Bacteria"/>
</dbReference>
<dbReference type="HOGENOM" id="CLU_076901_1_0_9"/>
<dbReference type="Proteomes" id="UP000002156">
    <property type="component" value="Chromosome"/>
</dbReference>
<dbReference type="GO" id="GO:0005737">
    <property type="term" value="C:cytoplasm"/>
    <property type="evidence" value="ECO:0007669"/>
    <property type="project" value="UniProtKB-SubCell"/>
</dbReference>
<dbReference type="GO" id="GO:0051500">
    <property type="term" value="F:D-tyrosyl-tRNA(Tyr) deacylase activity"/>
    <property type="evidence" value="ECO:0007669"/>
    <property type="project" value="TreeGrafter"/>
</dbReference>
<dbReference type="GO" id="GO:0106026">
    <property type="term" value="F:Gly-tRNA(Ala) deacylase activity"/>
    <property type="evidence" value="ECO:0007669"/>
    <property type="project" value="UniProtKB-UniRule"/>
</dbReference>
<dbReference type="GO" id="GO:0043908">
    <property type="term" value="F:Ser(Gly)-tRNA(Ala) hydrolase activity"/>
    <property type="evidence" value="ECO:0007669"/>
    <property type="project" value="UniProtKB-UniRule"/>
</dbReference>
<dbReference type="GO" id="GO:0000049">
    <property type="term" value="F:tRNA binding"/>
    <property type="evidence" value="ECO:0007669"/>
    <property type="project" value="UniProtKB-UniRule"/>
</dbReference>
<dbReference type="GO" id="GO:0019478">
    <property type="term" value="P:D-amino acid catabolic process"/>
    <property type="evidence" value="ECO:0007669"/>
    <property type="project" value="UniProtKB-UniRule"/>
</dbReference>
<dbReference type="CDD" id="cd00563">
    <property type="entry name" value="Dtyr_deacylase"/>
    <property type="match status" value="1"/>
</dbReference>
<dbReference type="FunFam" id="3.50.80.10:FF:000001">
    <property type="entry name" value="D-aminoacyl-tRNA deacylase"/>
    <property type="match status" value="1"/>
</dbReference>
<dbReference type="Gene3D" id="3.50.80.10">
    <property type="entry name" value="D-tyrosyl-tRNA(Tyr) deacylase"/>
    <property type="match status" value="1"/>
</dbReference>
<dbReference type="HAMAP" id="MF_00518">
    <property type="entry name" value="Deacylase_Dtd"/>
    <property type="match status" value="1"/>
</dbReference>
<dbReference type="InterPro" id="IPR003732">
    <property type="entry name" value="Daa-tRNA_deacyls_DTD"/>
</dbReference>
<dbReference type="InterPro" id="IPR023509">
    <property type="entry name" value="DTD-like_sf"/>
</dbReference>
<dbReference type="NCBIfam" id="TIGR00256">
    <property type="entry name" value="D-aminoacyl-tRNA deacylase"/>
    <property type="match status" value="1"/>
</dbReference>
<dbReference type="PANTHER" id="PTHR10472:SF5">
    <property type="entry name" value="D-AMINOACYL-TRNA DEACYLASE 1"/>
    <property type="match status" value="1"/>
</dbReference>
<dbReference type="PANTHER" id="PTHR10472">
    <property type="entry name" value="D-TYROSYL-TRNA TYR DEACYLASE"/>
    <property type="match status" value="1"/>
</dbReference>
<dbReference type="Pfam" id="PF02580">
    <property type="entry name" value="Tyr_Deacylase"/>
    <property type="match status" value="1"/>
</dbReference>
<dbReference type="SUPFAM" id="SSF69500">
    <property type="entry name" value="DTD-like"/>
    <property type="match status" value="1"/>
</dbReference>
<protein>
    <recommendedName>
        <fullName evidence="1">D-aminoacyl-tRNA deacylase</fullName>
        <shortName evidence="1">DTD</shortName>
        <ecNumber evidence="1">3.1.1.96</ecNumber>
    </recommendedName>
    <alternativeName>
        <fullName evidence="1">Gly-tRNA(Ala) deacylase</fullName>
    </alternativeName>
</protein>
<accession>B0K971</accession>
<keyword id="KW-0963">Cytoplasm</keyword>
<keyword id="KW-0378">Hydrolase</keyword>
<keyword id="KW-1185">Reference proteome</keyword>
<keyword id="KW-0694">RNA-binding</keyword>
<keyword id="KW-0820">tRNA-binding</keyword>
<reference key="1">
    <citation type="submission" date="2008-01" db="EMBL/GenBank/DDBJ databases">
        <title>Complete sequence of Thermoanaerobacter pseudethanolicus 39E.</title>
        <authorList>
            <person name="Copeland A."/>
            <person name="Lucas S."/>
            <person name="Lapidus A."/>
            <person name="Barry K."/>
            <person name="Glavina del Rio T."/>
            <person name="Dalin E."/>
            <person name="Tice H."/>
            <person name="Pitluck S."/>
            <person name="Bruce D."/>
            <person name="Goodwin L."/>
            <person name="Saunders E."/>
            <person name="Brettin T."/>
            <person name="Detter J.C."/>
            <person name="Han C."/>
            <person name="Schmutz J."/>
            <person name="Larimer F."/>
            <person name="Land M."/>
            <person name="Hauser L."/>
            <person name="Kyrpides N."/>
            <person name="Lykidis A."/>
            <person name="Hemme C."/>
            <person name="Fields M.W."/>
            <person name="He Z."/>
            <person name="Zhou J."/>
            <person name="Richardson P."/>
        </authorList>
    </citation>
    <scope>NUCLEOTIDE SEQUENCE [LARGE SCALE GENOMIC DNA]</scope>
    <source>
        <strain>ATCC 33223 / DSM 2355 / 39E</strain>
    </source>
</reference>